<comment type="function">
    <text evidence="1">Prohibitin probably acts as a holdase/unfoldase for the stabilization of newly synthesized mitochondrial proteins.</text>
</comment>
<comment type="subunit">
    <text evidence="3 5 6">Component of a prohibitin multimeric complex in mitochondrial membranes.</text>
</comment>
<comment type="interaction">
    <interactant intactId="EBI-531812">
        <id>Q9ZNT7</id>
    </interactant>
    <interactant intactId="EBI-15681313">
        <id>Q9LF53</id>
        <label>RGL3</label>
    </interactant>
    <organismsDiffer>false</organismsDiffer>
    <experiments>3</experiments>
</comment>
<comment type="subcellular location">
    <subcellularLocation>
        <location evidence="3 4 5 6 7">Mitochondrion inner membrane</location>
        <topology evidence="3 4 5 6 7">Single-pass type II membrane protein</topology>
    </subcellularLocation>
</comment>
<comment type="alternative products">
    <event type="alternative splicing"/>
    <isoform>
        <id>Q9ZNT7-1</id>
        <name>1</name>
        <sequence type="displayed"/>
    </isoform>
    <isoform>
        <id>Q9ZNT7-2</id>
        <name>2</name>
        <sequence type="described" ref="VSP_044541"/>
    </isoform>
</comment>
<comment type="tissue specificity">
    <text evidence="5">Mostly expressed in proliferative tissues, including vasculature, shoot and root apical tissues.</text>
</comment>
<comment type="similarity">
    <text evidence="8">Belongs to the prohibitin family.</text>
</comment>
<name>PHB2_ARATH</name>
<feature type="chain" id="PRO_0000420597" description="Prohibitin-2, mitochondrial">
    <location>
        <begin position="1"/>
        <end position="286"/>
    </location>
</feature>
<feature type="topological domain" description="Mitochondrial matrix" evidence="2">
    <location>
        <begin position="1"/>
        <end position="13"/>
    </location>
</feature>
<feature type="transmembrane region" description="Helical; Signal-anchor for type II membrane protein" evidence="2">
    <location>
        <begin position="14"/>
        <end position="32"/>
    </location>
</feature>
<feature type="topological domain" description="Mitochondrial intermembrane" evidence="2">
    <location>
        <begin position="33"/>
        <end position="286"/>
    </location>
</feature>
<feature type="coiled-coil region" evidence="2">
    <location>
        <begin position="186"/>
        <end position="219"/>
    </location>
</feature>
<feature type="splice variant" id="VSP_044541" description="In isoform 2." evidence="8">
    <location>
        <begin position="1"/>
        <end position="65"/>
    </location>
</feature>
<keyword id="KW-0025">Alternative splicing</keyword>
<keyword id="KW-0175">Coiled coil</keyword>
<keyword id="KW-0472">Membrane</keyword>
<keyword id="KW-0496">Mitochondrion</keyword>
<keyword id="KW-0999">Mitochondrion inner membrane</keyword>
<keyword id="KW-1185">Reference proteome</keyword>
<keyword id="KW-0735">Signal-anchor</keyword>
<keyword id="KW-0812">Transmembrane</keyword>
<keyword id="KW-1133">Transmembrane helix</keyword>
<accession>Q9ZNT7</accession>
<accession>F4I2J2</accession>
<sequence length="286" mass="31811">MSFNKVPNIPGAPALSALLKVSVIGGLGVYALTNSLYNVDGGHRAVMFNRLTGIKEKVYPEGTHFMVPWFERPIIYDVRARPYLVESTTGSHDLQMVKIGLRVLTRPMGDRLPQIYRTLGENYSERVLPSIIHETLKAVVAQYNASQLITQREAVSREIRKILTERASNFDIALDDVSITTLTFGKEFTAAIEAKQVAAQEAERAKFIVEKAEQDRRSAVIRAQGEAKSAQLIGQAIANNQAFITLRKIEAAREIAQTIAQSANKVYLSSNDLLLNLQEMNLEPKK</sequence>
<dbReference type="EMBL" id="U66592">
    <property type="protein sequence ID" value="AAD00156.1"/>
    <property type="molecule type" value="mRNA"/>
</dbReference>
<dbReference type="EMBL" id="U89791">
    <property type="protein sequence ID" value="AAD09244.1"/>
    <property type="molecule type" value="mRNA"/>
</dbReference>
<dbReference type="EMBL" id="AC003027">
    <property type="protein sequence ID" value="AAD10682.1"/>
    <property type="molecule type" value="Genomic_DNA"/>
</dbReference>
<dbReference type="EMBL" id="CP002684">
    <property type="protein sequence ID" value="AEE27624.1"/>
    <property type="molecule type" value="Genomic_DNA"/>
</dbReference>
<dbReference type="EMBL" id="CP002684">
    <property type="protein sequence ID" value="AEE27625.1"/>
    <property type="molecule type" value="Genomic_DNA"/>
</dbReference>
<dbReference type="EMBL" id="CP002684">
    <property type="protein sequence ID" value="AEE27626.1"/>
    <property type="molecule type" value="Genomic_DNA"/>
</dbReference>
<dbReference type="EMBL" id="AF370317">
    <property type="protein sequence ID" value="AAK44132.1"/>
    <property type="molecule type" value="mRNA"/>
</dbReference>
<dbReference type="EMBL" id="AY063102">
    <property type="protein sequence ID" value="AAL34276.1"/>
    <property type="molecule type" value="mRNA"/>
</dbReference>
<dbReference type="PIR" id="C86169">
    <property type="entry name" value="C86169"/>
</dbReference>
<dbReference type="RefSeq" id="NP_171882.1">
    <molecule id="Q9ZNT7-1"/>
    <property type="nucleotide sequence ID" value="NM_100266.3"/>
</dbReference>
<dbReference type="RefSeq" id="NP_973755.1">
    <molecule id="Q9ZNT7-2"/>
    <property type="nucleotide sequence ID" value="NM_202026.2"/>
</dbReference>
<dbReference type="RefSeq" id="NP_973756.1">
    <molecule id="Q9ZNT7-1"/>
    <property type="nucleotide sequence ID" value="NM_202027.2"/>
</dbReference>
<dbReference type="SMR" id="Q9ZNT7"/>
<dbReference type="BioGRID" id="24464">
    <property type="interactions" value="9"/>
</dbReference>
<dbReference type="FunCoup" id="Q9ZNT7">
    <property type="interactions" value="3638"/>
</dbReference>
<dbReference type="IntAct" id="Q9ZNT7">
    <property type="interactions" value="4"/>
</dbReference>
<dbReference type="STRING" id="3702.Q9ZNT7"/>
<dbReference type="PaxDb" id="3702-AT1G03860.3"/>
<dbReference type="ProteomicsDB" id="234719">
    <molecule id="Q9ZNT7-1"/>
</dbReference>
<dbReference type="EnsemblPlants" id="AT1G03860.1">
    <molecule id="Q9ZNT7-1"/>
    <property type="protein sequence ID" value="AT1G03860.1"/>
    <property type="gene ID" value="AT1G03860"/>
</dbReference>
<dbReference type="EnsemblPlants" id="AT1G03860.2">
    <molecule id="Q9ZNT7-2"/>
    <property type="protein sequence ID" value="AT1G03860.2"/>
    <property type="gene ID" value="AT1G03860"/>
</dbReference>
<dbReference type="EnsemblPlants" id="AT1G03860.3">
    <molecule id="Q9ZNT7-1"/>
    <property type="protein sequence ID" value="AT1G03860.3"/>
    <property type="gene ID" value="AT1G03860"/>
</dbReference>
<dbReference type="GeneID" id="839228"/>
<dbReference type="Gramene" id="AT1G03860.1">
    <molecule id="Q9ZNT7-1"/>
    <property type="protein sequence ID" value="AT1G03860.1"/>
    <property type="gene ID" value="AT1G03860"/>
</dbReference>
<dbReference type="Gramene" id="AT1G03860.2">
    <molecule id="Q9ZNT7-2"/>
    <property type="protein sequence ID" value="AT1G03860.2"/>
    <property type="gene ID" value="AT1G03860"/>
</dbReference>
<dbReference type="Gramene" id="AT1G03860.3">
    <molecule id="Q9ZNT7-1"/>
    <property type="protein sequence ID" value="AT1G03860.3"/>
    <property type="gene ID" value="AT1G03860"/>
</dbReference>
<dbReference type="KEGG" id="ath:AT1G03860"/>
<dbReference type="Araport" id="AT1G03860"/>
<dbReference type="TAIR" id="AT1G03860">
    <property type="gene designation" value="PHB2"/>
</dbReference>
<dbReference type="eggNOG" id="KOG3090">
    <property type="taxonomic scope" value="Eukaryota"/>
</dbReference>
<dbReference type="HOGENOM" id="CLU_047969_0_2_1"/>
<dbReference type="InParanoid" id="Q9ZNT7"/>
<dbReference type="OMA" id="DTHMPPP"/>
<dbReference type="PhylomeDB" id="Q9ZNT7"/>
<dbReference type="PRO" id="PR:Q9ZNT7"/>
<dbReference type="Proteomes" id="UP000006548">
    <property type="component" value="Chromosome 1"/>
</dbReference>
<dbReference type="ExpressionAtlas" id="Q9ZNT7">
    <property type="expression patterns" value="baseline and differential"/>
</dbReference>
<dbReference type="GO" id="GO:0005576">
    <property type="term" value="C:extracellular region"/>
    <property type="evidence" value="ECO:0007005"/>
    <property type="project" value="TAIR"/>
</dbReference>
<dbReference type="GO" id="GO:0005743">
    <property type="term" value="C:mitochondrial inner membrane"/>
    <property type="evidence" value="ECO:0007669"/>
    <property type="project" value="UniProtKB-SubCell"/>
</dbReference>
<dbReference type="GO" id="GO:0005739">
    <property type="term" value="C:mitochondrion"/>
    <property type="evidence" value="ECO:0000314"/>
    <property type="project" value="TAIR"/>
</dbReference>
<dbReference type="GO" id="GO:0009505">
    <property type="term" value="C:plant-type cell wall"/>
    <property type="evidence" value="ECO:0007005"/>
    <property type="project" value="TAIR"/>
</dbReference>
<dbReference type="GO" id="GO:0000325">
    <property type="term" value="C:plant-type vacuole"/>
    <property type="evidence" value="ECO:0007005"/>
    <property type="project" value="TAIR"/>
</dbReference>
<dbReference type="CDD" id="cd03401">
    <property type="entry name" value="SPFH_prohibitin"/>
    <property type="match status" value="1"/>
</dbReference>
<dbReference type="FunFam" id="3.30.479.30:FF:000001">
    <property type="entry name" value="Prohibitin 2"/>
    <property type="match status" value="1"/>
</dbReference>
<dbReference type="Gene3D" id="3.30.479.30">
    <property type="entry name" value="Band 7 domain"/>
    <property type="match status" value="1"/>
</dbReference>
<dbReference type="InterPro" id="IPR001107">
    <property type="entry name" value="Band_7"/>
</dbReference>
<dbReference type="InterPro" id="IPR036013">
    <property type="entry name" value="Band_7/SPFH_dom_sf"/>
</dbReference>
<dbReference type="InterPro" id="IPR000163">
    <property type="entry name" value="Prohibitin"/>
</dbReference>
<dbReference type="PANTHER" id="PTHR23222">
    <property type="entry name" value="PROHIBITIN"/>
    <property type="match status" value="1"/>
</dbReference>
<dbReference type="PANTHER" id="PTHR23222:SF20">
    <property type="entry name" value="PROHIBITIN-2, MITOCHONDRIAL-RELATED"/>
    <property type="match status" value="1"/>
</dbReference>
<dbReference type="Pfam" id="PF01145">
    <property type="entry name" value="Band_7"/>
    <property type="match status" value="1"/>
</dbReference>
<dbReference type="PRINTS" id="PR00679">
    <property type="entry name" value="PROHIBITIN"/>
</dbReference>
<dbReference type="SMART" id="SM00244">
    <property type="entry name" value="PHB"/>
    <property type="match status" value="1"/>
</dbReference>
<dbReference type="SUPFAM" id="SSF117892">
    <property type="entry name" value="Band 7/SPFH domain"/>
    <property type="match status" value="1"/>
</dbReference>
<gene>
    <name type="primary">PHB2</name>
    <name type="ordered locus">At1g03860</name>
    <name type="ORF">F21M11.21</name>
</gene>
<organism>
    <name type="scientific">Arabidopsis thaliana</name>
    <name type="common">Mouse-ear cress</name>
    <dbReference type="NCBI Taxonomy" id="3702"/>
    <lineage>
        <taxon>Eukaryota</taxon>
        <taxon>Viridiplantae</taxon>
        <taxon>Streptophyta</taxon>
        <taxon>Embryophyta</taxon>
        <taxon>Tracheophyta</taxon>
        <taxon>Spermatophyta</taxon>
        <taxon>Magnoliopsida</taxon>
        <taxon>eudicotyledons</taxon>
        <taxon>Gunneridae</taxon>
        <taxon>Pentapetalae</taxon>
        <taxon>rosids</taxon>
        <taxon>malvids</taxon>
        <taxon>Brassicales</taxon>
        <taxon>Brassicaceae</taxon>
        <taxon>Camelineae</taxon>
        <taxon>Arabidopsis</taxon>
    </lineage>
</organism>
<reference key="1">
    <citation type="submission" date="1996-08" db="EMBL/GenBank/DDBJ databases">
        <title>Arabidopsis genes encoding prohibitin: importance for early development.</title>
        <authorList>
            <person name="Sun L."/>
            <person name="Goodman H.M."/>
        </authorList>
    </citation>
    <scope>NUCLEOTIDE SEQUENCE [MRNA] (ISOFORM 1)</scope>
    <source>
        <strain>cv. Columbia</strain>
    </source>
</reference>
<reference key="2">
    <citation type="submission" date="1997-02" db="EMBL/GenBank/DDBJ databases">
        <title>Cloning of an Arabidopsis thaliana prohibitin-like cDNA by functional complementation of a sulfate transport yeast mutant.</title>
        <authorList>
            <person name="Hatzfeld Y."/>
            <person name="Logan H.M."/>
            <person name="Cathala N."/>
            <person name="Davidian J.-C."/>
        </authorList>
    </citation>
    <scope>NUCLEOTIDE SEQUENCE [MRNA] (ISOFORM 1)</scope>
</reference>
<reference key="3">
    <citation type="journal article" date="2000" name="Nature">
        <title>Sequence and analysis of chromosome 1 of the plant Arabidopsis thaliana.</title>
        <authorList>
            <person name="Theologis A."/>
            <person name="Ecker J.R."/>
            <person name="Palm C.J."/>
            <person name="Federspiel N.A."/>
            <person name="Kaul S."/>
            <person name="White O."/>
            <person name="Alonso J."/>
            <person name="Altafi H."/>
            <person name="Araujo R."/>
            <person name="Bowman C.L."/>
            <person name="Brooks S.Y."/>
            <person name="Buehler E."/>
            <person name="Chan A."/>
            <person name="Chao Q."/>
            <person name="Chen H."/>
            <person name="Cheuk R.F."/>
            <person name="Chin C.W."/>
            <person name="Chung M.K."/>
            <person name="Conn L."/>
            <person name="Conway A.B."/>
            <person name="Conway A.R."/>
            <person name="Creasy T.H."/>
            <person name="Dewar K."/>
            <person name="Dunn P."/>
            <person name="Etgu P."/>
            <person name="Feldblyum T.V."/>
            <person name="Feng J.-D."/>
            <person name="Fong B."/>
            <person name="Fujii C.Y."/>
            <person name="Gill J.E."/>
            <person name="Goldsmith A.D."/>
            <person name="Haas B."/>
            <person name="Hansen N.F."/>
            <person name="Hughes B."/>
            <person name="Huizar L."/>
            <person name="Hunter J.L."/>
            <person name="Jenkins J."/>
            <person name="Johnson-Hopson C."/>
            <person name="Khan S."/>
            <person name="Khaykin E."/>
            <person name="Kim C.J."/>
            <person name="Koo H.L."/>
            <person name="Kremenetskaia I."/>
            <person name="Kurtz D.B."/>
            <person name="Kwan A."/>
            <person name="Lam B."/>
            <person name="Langin-Hooper S."/>
            <person name="Lee A."/>
            <person name="Lee J.M."/>
            <person name="Lenz C.A."/>
            <person name="Li J.H."/>
            <person name="Li Y.-P."/>
            <person name="Lin X."/>
            <person name="Liu S.X."/>
            <person name="Liu Z.A."/>
            <person name="Luros J.S."/>
            <person name="Maiti R."/>
            <person name="Marziali A."/>
            <person name="Militscher J."/>
            <person name="Miranda M."/>
            <person name="Nguyen M."/>
            <person name="Nierman W.C."/>
            <person name="Osborne B.I."/>
            <person name="Pai G."/>
            <person name="Peterson J."/>
            <person name="Pham P.K."/>
            <person name="Rizzo M."/>
            <person name="Rooney T."/>
            <person name="Rowley D."/>
            <person name="Sakano H."/>
            <person name="Salzberg S.L."/>
            <person name="Schwartz J.R."/>
            <person name="Shinn P."/>
            <person name="Southwick A.M."/>
            <person name="Sun H."/>
            <person name="Tallon L.J."/>
            <person name="Tambunga G."/>
            <person name="Toriumi M.J."/>
            <person name="Town C.D."/>
            <person name="Utterback T."/>
            <person name="Van Aken S."/>
            <person name="Vaysberg M."/>
            <person name="Vysotskaia V.S."/>
            <person name="Walker M."/>
            <person name="Wu D."/>
            <person name="Yu G."/>
            <person name="Fraser C.M."/>
            <person name="Venter J.C."/>
            <person name="Davis R.W."/>
        </authorList>
    </citation>
    <scope>NUCLEOTIDE SEQUENCE [LARGE SCALE GENOMIC DNA]</scope>
    <source>
        <strain>cv. Columbia</strain>
    </source>
</reference>
<reference key="4">
    <citation type="journal article" date="2017" name="Plant J.">
        <title>Araport11: a complete reannotation of the Arabidopsis thaliana reference genome.</title>
        <authorList>
            <person name="Cheng C.Y."/>
            <person name="Krishnakumar V."/>
            <person name="Chan A.P."/>
            <person name="Thibaud-Nissen F."/>
            <person name="Schobel S."/>
            <person name="Town C.D."/>
        </authorList>
    </citation>
    <scope>GENOME REANNOTATION</scope>
    <source>
        <strain>cv. Columbia</strain>
    </source>
</reference>
<reference key="5">
    <citation type="journal article" date="2003" name="Science">
        <title>Empirical analysis of transcriptional activity in the Arabidopsis genome.</title>
        <authorList>
            <person name="Yamada K."/>
            <person name="Lim J."/>
            <person name="Dale J.M."/>
            <person name="Chen H."/>
            <person name="Shinn P."/>
            <person name="Palm C.J."/>
            <person name="Southwick A.M."/>
            <person name="Wu H.C."/>
            <person name="Kim C.J."/>
            <person name="Nguyen M."/>
            <person name="Pham P.K."/>
            <person name="Cheuk R.F."/>
            <person name="Karlin-Newmann G."/>
            <person name="Liu S.X."/>
            <person name="Lam B."/>
            <person name="Sakano H."/>
            <person name="Wu T."/>
            <person name="Yu G."/>
            <person name="Miranda M."/>
            <person name="Quach H.L."/>
            <person name="Tripp M."/>
            <person name="Chang C.H."/>
            <person name="Lee J.M."/>
            <person name="Toriumi M.J."/>
            <person name="Chan M.M."/>
            <person name="Tang C.C."/>
            <person name="Onodera C.S."/>
            <person name="Deng J.M."/>
            <person name="Akiyama K."/>
            <person name="Ansari Y."/>
            <person name="Arakawa T."/>
            <person name="Banh J."/>
            <person name="Banno F."/>
            <person name="Bowser L."/>
            <person name="Brooks S.Y."/>
            <person name="Carninci P."/>
            <person name="Chao Q."/>
            <person name="Choy N."/>
            <person name="Enju A."/>
            <person name="Goldsmith A.D."/>
            <person name="Gurjal M."/>
            <person name="Hansen N.F."/>
            <person name="Hayashizaki Y."/>
            <person name="Johnson-Hopson C."/>
            <person name="Hsuan V.W."/>
            <person name="Iida K."/>
            <person name="Karnes M."/>
            <person name="Khan S."/>
            <person name="Koesema E."/>
            <person name="Ishida J."/>
            <person name="Jiang P.X."/>
            <person name="Jones T."/>
            <person name="Kawai J."/>
            <person name="Kamiya A."/>
            <person name="Meyers C."/>
            <person name="Nakajima M."/>
            <person name="Narusaka M."/>
            <person name="Seki M."/>
            <person name="Sakurai T."/>
            <person name="Satou M."/>
            <person name="Tamse R."/>
            <person name="Vaysberg M."/>
            <person name="Wallender E.K."/>
            <person name="Wong C."/>
            <person name="Yamamura Y."/>
            <person name="Yuan S."/>
            <person name="Shinozaki K."/>
            <person name="Davis R.W."/>
            <person name="Theologis A."/>
            <person name="Ecker J.R."/>
        </authorList>
    </citation>
    <scope>NUCLEOTIDE SEQUENCE [LARGE SCALE MRNA] (ISOFORM 1)</scope>
    <source>
        <strain>cv. Columbia</strain>
    </source>
</reference>
<reference key="6">
    <citation type="journal article" date="2003" name="Biochim. Biophys. Acta">
        <title>Mitochondrial complex I from Arabidopsis and rice: orthologs of mammalian and fungal components coupled with plant-specific subunits.</title>
        <authorList>
            <person name="Heazlewood J.L."/>
            <person name="Howell K.A."/>
            <person name="Millar A.H."/>
        </authorList>
    </citation>
    <scope>SUBCELLULAR LOCATION</scope>
    <scope>IDENTIFICATION BY MASS SPECTROMETRY</scope>
    <scope>SUBUNIT</scope>
</reference>
<reference key="7">
    <citation type="journal article" date="2004" name="Plant Cell">
        <title>Experimental analysis of the Arabidopsis mitochondrial proteome highlights signaling and regulatory components, provides assessment of targeting prediction programs, and indicates plant-specific mitochondrial proteins.</title>
        <authorList>
            <person name="Heazlewood J.L."/>
            <person name="Tonti-Filippini J.S."/>
            <person name="Gout A.M."/>
            <person name="Day D.A."/>
            <person name="Whelan J."/>
            <person name="Millar A.H."/>
        </authorList>
    </citation>
    <scope>IDENTIFICATION BY MASS SPECTROMETRY</scope>
    <scope>SUBCELLULAR LOCATION [LARGE SCALE ANALYSIS]</scope>
    <source>
        <strain>cv. Landsberg erecta</strain>
    </source>
</reference>
<reference key="8">
    <citation type="journal article" date="2007" name="Mol. Cell. Proteomics">
        <title>Multidimensional protein identification technology (MudPIT) analysis of ubiquitinated proteins in plants.</title>
        <authorList>
            <person name="Maor R."/>
            <person name="Jones A."/>
            <person name="Nuehse T.S."/>
            <person name="Studholme D.J."/>
            <person name="Peck S.C."/>
            <person name="Shirasu K."/>
        </authorList>
    </citation>
    <scope>IDENTIFICATION BY MASS SPECTROMETRY [LARGE SCALE ANALYSIS]</scope>
    <source>
        <strain>cv. Landsberg erecta</strain>
    </source>
</reference>
<reference key="9">
    <citation type="journal article" date="2007" name="Plant J.">
        <title>Mitochondrial type-I prohibitins of Arabidopsis thaliana are required for supporting proficient meristem development.</title>
        <authorList>
            <person name="Van Aken O."/>
            <person name="Pecenkova T."/>
            <person name="van de Cotte B."/>
            <person name="De Rycke R."/>
            <person name="Eeckhout D."/>
            <person name="Fromm H."/>
            <person name="De Jaeger G."/>
            <person name="Witters E."/>
            <person name="Beemster G.T.S."/>
            <person name="Inze D."/>
            <person name="Van Breusegem F."/>
        </authorList>
    </citation>
    <scope>TISSUE SPECIFICITY</scope>
    <scope>SUBUNIT</scope>
    <scope>SUBCELLULAR LOCATION</scope>
    <scope>IDENTIFICATION BY MASS SPECTROMETRY</scope>
    <source>
        <strain>cv. Columbia</strain>
    </source>
</reference>
<reference key="10">
    <citation type="journal article" date="2008" name="J. Proteome Res.">
        <title>Resolving and identifying protein components of plant mitochondrial respiratory complexes using three dimensions of gel electrophoresis.</title>
        <authorList>
            <person name="Meyer E.H."/>
            <person name="Taylor N.L."/>
            <person name="Millar A.H."/>
        </authorList>
    </citation>
    <scope>IDENTIFICATION BY MASS SPECTROMETRY</scope>
    <scope>SUBCELLULAR LOCATION</scope>
    <scope>SUBUNIT</scope>
</reference>
<reference key="11">
    <citation type="journal article" date="2011" name="Plant Physiol.">
        <title>Defining the protein complex proteome of plant mitochondria.</title>
        <authorList>
            <person name="Klodmann J."/>
            <person name="Senkler M."/>
            <person name="Rode C."/>
            <person name="Braun H.-P."/>
        </authorList>
    </citation>
    <scope>IDENTIFICATION BY MASS SPECTROMETRY</scope>
    <scope>SUBCELLULAR LOCATION [LARGE SCALE ANALYSIS]</scope>
</reference>
<proteinExistence type="evidence at protein level"/>
<evidence type="ECO:0000250" key="1"/>
<evidence type="ECO:0000255" key="2"/>
<evidence type="ECO:0000269" key="3">
    <source>
    </source>
</evidence>
<evidence type="ECO:0000269" key="4">
    <source>
    </source>
</evidence>
<evidence type="ECO:0000269" key="5">
    <source>
    </source>
</evidence>
<evidence type="ECO:0000269" key="6">
    <source>
    </source>
</evidence>
<evidence type="ECO:0000269" key="7">
    <source>
    </source>
</evidence>
<evidence type="ECO:0000305" key="8"/>
<protein>
    <recommendedName>
        <fullName>Prohibitin-2, mitochondrial</fullName>
        <shortName>Atphb2</shortName>
    </recommendedName>
</protein>